<gene>
    <name evidence="1" type="primary">rplS</name>
    <name type="ordered locus">HPSH_05920</name>
</gene>
<dbReference type="EMBL" id="CP001072">
    <property type="protein sequence ID" value="ACD48588.1"/>
    <property type="molecule type" value="Genomic_DNA"/>
</dbReference>
<dbReference type="RefSeq" id="WP_000797699.1">
    <property type="nucleotide sequence ID" value="NC_010698.2"/>
</dbReference>
<dbReference type="SMR" id="B2UUQ6"/>
<dbReference type="KEGG" id="hps:HPSH_05920"/>
<dbReference type="HOGENOM" id="CLU_103507_2_1_7"/>
<dbReference type="GO" id="GO:0022625">
    <property type="term" value="C:cytosolic large ribosomal subunit"/>
    <property type="evidence" value="ECO:0007669"/>
    <property type="project" value="TreeGrafter"/>
</dbReference>
<dbReference type="GO" id="GO:0003735">
    <property type="term" value="F:structural constituent of ribosome"/>
    <property type="evidence" value="ECO:0007669"/>
    <property type="project" value="InterPro"/>
</dbReference>
<dbReference type="GO" id="GO:0006412">
    <property type="term" value="P:translation"/>
    <property type="evidence" value="ECO:0007669"/>
    <property type="project" value="UniProtKB-UniRule"/>
</dbReference>
<dbReference type="FunFam" id="2.30.30.790:FF:000001">
    <property type="entry name" value="50S ribosomal protein L19"/>
    <property type="match status" value="1"/>
</dbReference>
<dbReference type="Gene3D" id="2.30.30.790">
    <property type="match status" value="1"/>
</dbReference>
<dbReference type="HAMAP" id="MF_00402">
    <property type="entry name" value="Ribosomal_bL19"/>
    <property type="match status" value="1"/>
</dbReference>
<dbReference type="InterPro" id="IPR001857">
    <property type="entry name" value="Ribosomal_bL19"/>
</dbReference>
<dbReference type="InterPro" id="IPR018257">
    <property type="entry name" value="Ribosomal_bL19_CS"/>
</dbReference>
<dbReference type="InterPro" id="IPR038657">
    <property type="entry name" value="Ribosomal_bL19_sf"/>
</dbReference>
<dbReference type="InterPro" id="IPR008991">
    <property type="entry name" value="Translation_prot_SH3-like_sf"/>
</dbReference>
<dbReference type="NCBIfam" id="TIGR01024">
    <property type="entry name" value="rplS_bact"/>
    <property type="match status" value="1"/>
</dbReference>
<dbReference type="PANTHER" id="PTHR15680:SF9">
    <property type="entry name" value="LARGE RIBOSOMAL SUBUNIT PROTEIN BL19M"/>
    <property type="match status" value="1"/>
</dbReference>
<dbReference type="PANTHER" id="PTHR15680">
    <property type="entry name" value="RIBOSOMAL PROTEIN L19"/>
    <property type="match status" value="1"/>
</dbReference>
<dbReference type="Pfam" id="PF01245">
    <property type="entry name" value="Ribosomal_L19"/>
    <property type="match status" value="1"/>
</dbReference>
<dbReference type="PIRSF" id="PIRSF002191">
    <property type="entry name" value="Ribosomal_L19"/>
    <property type="match status" value="1"/>
</dbReference>
<dbReference type="PRINTS" id="PR00061">
    <property type="entry name" value="RIBOSOMALL19"/>
</dbReference>
<dbReference type="SUPFAM" id="SSF50104">
    <property type="entry name" value="Translation proteins SH3-like domain"/>
    <property type="match status" value="1"/>
</dbReference>
<dbReference type="PROSITE" id="PS01015">
    <property type="entry name" value="RIBOSOMAL_L19"/>
    <property type="match status" value="1"/>
</dbReference>
<accession>B2UUQ6</accession>
<reference key="1">
    <citation type="submission" date="2008-05" db="EMBL/GenBank/DDBJ databases">
        <title>Genome sequence of Helicobacter pylori from the remote Amazon: traces of Asian ancestry of the first Americans.</title>
        <authorList>
            <person name="Kersulyte D."/>
            <person name="Kalia A."/>
            <person name="Gilman R.H."/>
            <person name="Berg D.E."/>
        </authorList>
    </citation>
    <scope>NUCLEOTIDE SEQUENCE [LARGE SCALE GENOMIC DNA]</scope>
    <source>
        <strain>Shi470</strain>
    </source>
</reference>
<name>RL19_HELPS</name>
<comment type="function">
    <text evidence="1">This protein is located at the 30S-50S ribosomal subunit interface and may play a role in the structure and function of the aminoacyl-tRNA binding site.</text>
</comment>
<comment type="similarity">
    <text evidence="1">Belongs to the bacterial ribosomal protein bL19 family.</text>
</comment>
<evidence type="ECO:0000255" key="1">
    <source>
        <dbReference type="HAMAP-Rule" id="MF_00402"/>
    </source>
</evidence>
<evidence type="ECO:0000305" key="2"/>
<keyword id="KW-0687">Ribonucleoprotein</keyword>
<keyword id="KW-0689">Ribosomal protein</keyword>
<proteinExistence type="inferred from homology"/>
<sequence length="118" mass="13600">MKNRYIQQFEDAQLKDKTMPAFKAGDTLRLGITIKEGEKTRTQYFEGVCIAIRGNGVDKTFCVRKIGANNIGVEKIFPFYSESLASVEVLRVGRVRRAKLYYLRDRRGKAARIKEVRH</sequence>
<feature type="chain" id="PRO_1000193849" description="Large ribosomal subunit protein bL19">
    <location>
        <begin position="1"/>
        <end position="118"/>
    </location>
</feature>
<organism>
    <name type="scientific">Helicobacter pylori (strain Shi470)</name>
    <dbReference type="NCBI Taxonomy" id="512562"/>
    <lineage>
        <taxon>Bacteria</taxon>
        <taxon>Pseudomonadati</taxon>
        <taxon>Campylobacterota</taxon>
        <taxon>Epsilonproteobacteria</taxon>
        <taxon>Campylobacterales</taxon>
        <taxon>Helicobacteraceae</taxon>
        <taxon>Helicobacter</taxon>
    </lineage>
</organism>
<protein>
    <recommendedName>
        <fullName evidence="1">Large ribosomal subunit protein bL19</fullName>
    </recommendedName>
    <alternativeName>
        <fullName evidence="2">50S ribosomal protein L19</fullName>
    </alternativeName>
</protein>